<reference key="1">
    <citation type="journal article" date="2005" name="PLoS Biol.">
        <title>The genomes of Oryza sativa: a history of duplications.</title>
        <authorList>
            <person name="Yu J."/>
            <person name="Wang J."/>
            <person name="Lin W."/>
            <person name="Li S."/>
            <person name="Li H."/>
            <person name="Zhou J."/>
            <person name="Ni P."/>
            <person name="Dong W."/>
            <person name="Hu S."/>
            <person name="Zeng C."/>
            <person name="Zhang J."/>
            <person name="Zhang Y."/>
            <person name="Li R."/>
            <person name="Xu Z."/>
            <person name="Li S."/>
            <person name="Li X."/>
            <person name="Zheng H."/>
            <person name="Cong L."/>
            <person name="Lin L."/>
            <person name="Yin J."/>
            <person name="Geng J."/>
            <person name="Li G."/>
            <person name="Shi J."/>
            <person name="Liu J."/>
            <person name="Lv H."/>
            <person name="Li J."/>
            <person name="Wang J."/>
            <person name="Deng Y."/>
            <person name="Ran L."/>
            <person name="Shi X."/>
            <person name="Wang X."/>
            <person name="Wu Q."/>
            <person name="Li C."/>
            <person name="Ren X."/>
            <person name="Wang J."/>
            <person name="Wang X."/>
            <person name="Li D."/>
            <person name="Liu D."/>
            <person name="Zhang X."/>
            <person name="Ji Z."/>
            <person name="Zhao W."/>
            <person name="Sun Y."/>
            <person name="Zhang Z."/>
            <person name="Bao J."/>
            <person name="Han Y."/>
            <person name="Dong L."/>
            <person name="Ji J."/>
            <person name="Chen P."/>
            <person name="Wu S."/>
            <person name="Liu J."/>
            <person name="Xiao Y."/>
            <person name="Bu D."/>
            <person name="Tan J."/>
            <person name="Yang L."/>
            <person name="Ye C."/>
            <person name="Zhang J."/>
            <person name="Xu J."/>
            <person name="Zhou Y."/>
            <person name="Yu Y."/>
            <person name="Zhang B."/>
            <person name="Zhuang S."/>
            <person name="Wei H."/>
            <person name="Liu B."/>
            <person name="Lei M."/>
            <person name="Yu H."/>
            <person name="Li Y."/>
            <person name="Xu H."/>
            <person name="Wei S."/>
            <person name="He X."/>
            <person name="Fang L."/>
            <person name="Zhang Z."/>
            <person name="Zhang Y."/>
            <person name="Huang X."/>
            <person name="Su Z."/>
            <person name="Tong W."/>
            <person name="Li J."/>
            <person name="Tong Z."/>
            <person name="Li S."/>
            <person name="Ye J."/>
            <person name="Wang L."/>
            <person name="Fang L."/>
            <person name="Lei T."/>
            <person name="Chen C.-S."/>
            <person name="Chen H.-C."/>
            <person name="Xu Z."/>
            <person name="Li H."/>
            <person name="Huang H."/>
            <person name="Zhang F."/>
            <person name="Xu H."/>
            <person name="Li N."/>
            <person name="Zhao C."/>
            <person name="Li S."/>
            <person name="Dong L."/>
            <person name="Huang Y."/>
            <person name="Li L."/>
            <person name="Xi Y."/>
            <person name="Qi Q."/>
            <person name="Li W."/>
            <person name="Zhang B."/>
            <person name="Hu W."/>
            <person name="Zhang Y."/>
            <person name="Tian X."/>
            <person name="Jiao Y."/>
            <person name="Liang X."/>
            <person name="Jin J."/>
            <person name="Gao L."/>
            <person name="Zheng W."/>
            <person name="Hao B."/>
            <person name="Liu S.-M."/>
            <person name="Wang W."/>
            <person name="Yuan L."/>
            <person name="Cao M."/>
            <person name="McDermott J."/>
            <person name="Samudrala R."/>
            <person name="Wang J."/>
            <person name="Wong G.K.-S."/>
            <person name="Yang H."/>
        </authorList>
    </citation>
    <scope>NUCLEOTIDE SEQUENCE [LARGE SCALE GENOMIC DNA]</scope>
    <source>
        <strain>cv. 93-11</strain>
    </source>
</reference>
<dbReference type="EMBL" id="CM000128">
    <property type="protein sequence ID" value="EEC74612.1"/>
    <property type="molecule type" value="Genomic_DNA"/>
</dbReference>
<dbReference type="STRING" id="39946.B8APC7"/>
<dbReference type="EnsemblPlants" id="BGIOSGA011351-TA">
    <property type="protein sequence ID" value="BGIOSGA011351-PA"/>
    <property type="gene ID" value="BGIOSGA011351"/>
</dbReference>
<dbReference type="EnsemblPlants" id="OsGoSa_03g0005580.01">
    <property type="protein sequence ID" value="OsGoSa_03g0005580.01"/>
    <property type="gene ID" value="OsGoSa_03g0005580"/>
</dbReference>
<dbReference type="EnsemblPlants" id="OsIR64_03g0005510.01">
    <property type="protein sequence ID" value="OsIR64_03g0005510.01"/>
    <property type="gene ID" value="OsIR64_03g0005510"/>
</dbReference>
<dbReference type="EnsemblPlants" id="OsKYG_03g0005600.01">
    <property type="protein sequence ID" value="OsKYG_03g0005600.01"/>
    <property type="gene ID" value="OsKYG_03g0005600"/>
</dbReference>
<dbReference type="EnsemblPlants" id="OsLaMu_03g0005590.01">
    <property type="protein sequence ID" value="OsLaMu_03g0005590.01"/>
    <property type="gene ID" value="OsLaMu_03g0005590"/>
</dbReference>
<dbReference type="EnsemblPlants" id="OsLima_03g0005600.01">
    <property type="protein sequence ID" value="OsLima_03g0005600.01"/>
    <property type="gene ID" value="OsLima_03g0005600"/>
</dbReference>
<dbReference type="EnsemblPlants" id="OsLiXu_03g0005610.01">
    <property type="protein sequence ID" value="OsLiXu_03g0005610.01"/>
    <property type="gene ID" value="OsLiXu_03g0005610"/>
</dbReference>
<dbReference type="EnsemblPlants" id="OsMH63_03G005560_01">
    <property type="protein sequence ID" value="OsMH63_03G005560_01"/>
    <property type="gene ID" value="OsMH63_03G005560"/>
</dbReference>
<dbReference type="EnsemblPlants" id="OsPr106_03g0005630.01">
    <property type="protein sequence ID" value="OsPr106_03g0005630.01"/>
    <property type="gene ID" value="OsPr106_03g0005630"/>
</dbReference>
<dbReference type="EnsemblPlants" id="OsZS97_03G005440_01">
    <property type="protein sequence ID" value="OsZS97_03G005440_01"/>
    <property type="gene ID" value="OsZS97_03G005440"/>
</dbReference>
<dbReference type="Gramene" id="BGIOSGA011351-TA">
    <property type="protein sequence ID" value="BGIOSGA011351-PA"/>
    <property type="gene ID" value="BGIOSGA011351"/>
</dbReference>
<dbReference type="Gramene" id="OsGoSa_03g0005580.01">
    <property type="protein sequence ID" value="OsGoSa_03g0005580.01"/>
    <property type="gene ID" value="OsGoSa_03g0005580"/>
</dbReference>
<dbReference type="Gramene" id="OsIR64_03g0005510.01">
    <property type="protein sequence ID" value="OsIR64_03g0005510.01"/>
    <property type="gene ID" value="OsIR64_03g0005510"/>
</dbReference>
<dbReference type="Gramene" id="OsKYG_03g0005600.01">
    <property type="protein sequence ID" value="OsKYG_03g0005600.01"/>
    <property type="gene ID" value="OsKYG_03g0005600"/>
</dbReference>
<dbReference type="Gramene" id="OsLaMu_03g0005590.01">
    <property type="protein sequence ID" value="OsLaMu_03g0005590.01"/>
    <property type="gene ID" value="OsLaMu_03g0005590"/>
</dbReference>
<dbReference type="Gramene" id="OsLima_03g0005600.01">
    <property type="protein sequence ID" value="OsLima_03g0005600.01"/>
    <property type="gene ID" value="OsLima_03g0005600"/>
</dbReference>
<dbReference type="Gramene" id="OsLiXu_03g0005610.01">
    <property type="protein sequence ID" value="OsLiXu_03g0005610.01"/>
    <property type="gene ID" value="OsLiXu_03g0005610"/>
</dbReference>
<dbReference type="Gramene" id="OsMH63_03G005560_01">
    <property type="protein sequence ID" value="OsMH63_03G005560_01"/>
    <property type="gene ID" value="OsMH63_03G005560"/>
</dbReference>
<dbReference type="Gramene" id="OsPr106_03g0005630.01">
    <property type="protein sequence ID" value="OsPr106_03g0005630.01"/>
    <property type="gene ID" value="OsPr106_03g0005630"/>
</dbReference>
<dbReference type="Gramene" id="OsZS97_03G005440_01">
    <property type="protein sequence ID" value="OsZS97_03G005440_01"/>
    <property type="gene ID" value="OsZS97_03G005440"/>
</dbReference>
<dbReference type="HOGENOM" id="CLU_048356_0_0_1"/>
<dbReference type="OMA" id="HYSYYYK"/>
<dbReference type="OrthoDB" id="680041at2759"/>
<dbReference type="Proteomes" id="UP000007015">
    <property type="component" value="Chromosome 3"/>
</dbReference>
<dbReference type="GO" id="GO:0005886">
    <property type="term" value="C:plasma membrane"/>
    <property type="evidence" value="ECO:0000250"/>
    <property type="project" value="UniProtKB"/>
</dbReference>
<dbReference type="GO" id="GO:0060918">
    <property type="term" value="P:auxin transport"/>
    <property type="evidence" value="ECO:0000250"/>
    <property type="project" value="UniProtKB"/>
</dbReference>
<dbReference type="GO" id="GO:0009734">
    <property type="term" value="P:auxin-activated signaling pathway"/>
    <property type="evidence" value="ECO:0007669"/>
    <property type="project" value="UniProtKB-KW"/>
</dbReference>
<dbReference type="GO" id="GO:0009630">
    <property type="term" value="P:gravitropism"/>
    <property type="evidence" value="ECO:0000250"/>
    <property type="project" value="UniProtKB"/>
</dbReference>
<dbReference type="GO" id="GO:0010929">
    <property type="term" value="P:positive regulation of auxin mediated signaling pathway"/>
    <property type="evidence" value="ECO:0000250"/>
    <property type="project" value="UniProtKB"/>
</dbReference>
<dbReference type="GO" id="GO:0080113">
    <property type="term" value="P:regulation of seed growth"/>
    <property type="evidence" value="ECO:0000250"/>
    <property type="project" value="UniProtKB"/>
</dbReference>
<dbReference type="InterPro" id="IPR039621">
    <property type="entry name" value="BG1-like"/>
</dbReference>
<dbReference type="PANTHER" id="PTHR33541:SF28">
    <property type="entry name" value="PROTEIN BIG GRAIN 1-LIKE A"/>
    <property type="match status" value="1"/>
</dbReference>
<dbReference type="PANTHER" id="PTHR33541">
    <property type="entry name" value="PROTEIN BIG GRAIN 1-LIKE A-RELATED"/>
    <property type="match status" value="1"/>
</dbReference>
<accession>B8APC7</accession>
<organism evidence="6">
    <name type="scientific">Oryza sativa subsp. indica</name>
    <name type="common">Rice</name>
    <dbReference type="NCBI Taxonomy" id="39946"/>
    <lineage>
        <taxon>Eukaryota</taxon>
        <taxon>Viridiplantae</taxon>
        <taxon>Streptophyta</taxon>
        <taxon>Embryophyta</taxon>
        <taxon>Tracheophyta</taxon>
        <taxon>Spermatophyta</taxon>
        <taxon>Magnoliopsida</taxon>
        <taxon>Liliopsida</taxon>
        <taxon>Poales</taxon>
        <taxon>Poaceae</taxon>
        <taxon>BOP clade</taxon>
        <taxon>Oryzoideae</taxon>
        <taxon>Oryzeae</taxon>
        <taxon>Oryzinae</taxon>
        <taxon>Oryza</taxon>
        <taxon>Oryza sativa</taxon>
    </lineage>
</organism>
<comment type="function">
    <text evidence="1">Involved in auxin transport. Positive regulator of the auxin signaling pathway involved in gravitropism, plant growth and grain development.</text>
</comment>
<comment type="subcellular location">
    <subcellularLocation>
        <location evidence="1">Cell membrane</location>
    </subcellularLocation>
</comment>
<comment type="similarity">
    <text evidence="4">Belongs to the BIG GRAIN 1 (BG1) plant protein family.</text>
</comment>
<feature type="chain" id="PRO_0000434441" description="Protein BIG GRAIN 1" evidence="2">
    <location>
        <begin position="1"/>
        <end position="310"/>
    </location>
</feature>
<feature type="region of interest" description="Disordered" evidence="3">
    <location>
        <begin position="81"/>
        <end position="141"/>
    </location>
</feature>
<feature type="compositionally biased region" description="Low complexity" evidence="3">
    <location>
        <begin position="90"/>
        <end position="106"/>
    </location>
</feature>
<proteinExistence type="inferred from homology"/>
<name>BG1_ORYSI</name>
<evidence type="ECO:0000250" key="1">
    <source>
        <dbReference type="UniProtKB" id="Q10R09"/>
    </source>
</evidence>
<evidence type="ECO:0000255" key="2"/>
<evidence type="ECO:0000256" key="3">
    <source>
        <dbReference type="SAM" id="MobiDB-lite"/>
    </source>
</evidence>
<evidence type="ECO:0000305" key="4"/>
<evidence type="ECO:0000312" key="5">
    <source>
        <dbReference type="EMBL" id="EEC74612.1"/>
    </source>
</evidence>
<evidence type="ECO:0000312" key="6">
    <source>
        <dbReference type="Proteomes" id="UP000007015"/>
    </source>
</evidence>
<gene>
    <name evidence="4" type="primary">BG1</name>
    <name evidence="5" type="ORF">OsI_10227</name>
</gene>
<keyword id="KW-0927">Auxin signaling pathway</keyword>
<keyword id="KW-1003">Cell membrane</keyword>
<keyword id="KW-0472">Membrane</keyword>
<keyword id="KW-1185">Reference proteome</keyword>
<keyword id="KW-0813">Transport</keyword>
<protein>
    <recommendedName>
        <fullName evidence="4">Protein BIG GRAIN 1</fullName>
    </recommendedName>
</protein>
<sequence length="310" mass="32853">MERWAAPKVTAGSARRYVADQPSFSSTLLDAIYKSMDEQPGHGGGATGVEAVAAAAKKQHEAALHYGYYYKPSLAGSYRARAPGPHATTSSSSECSSYGGFSSSEAESSHHRRLRPIRTTVPGGAPGPAPEKKAKKPGASIRAKLRDLRKPASPGARLAGFLNSIFAGKRAPATPPSATAGAESACSTASSYSRSCLSKTPSTRGQAKRTVRFLDSDTESLASSTVVDRRRVPVEAVQQMLLQRMEMESDEDDDESSDASSDLFELENFAAIAPAGAAYRDELPVYETTRVALNRAIGHGYGHGRSARVV</sequence>